<proteinExistence type="evidence at transcript level"/>
<protein>
    <recommendedName>
        <fullName>Delta-like protein 3</fullName>
    </recommendedName>
    <alternativeName>
        <fullName>Drosophila Delta homolog 3</fullName>
        <shortName>Delta3</shortName>
    </alternativeName>
</protein>
<reference key="1">
    <citation type="submission" date="1998-08" db="EMBL/GenBank/DDBJ databases">
        <title>Rattus norvegicus mRNA for Delta 3: a putative ligand for Notch.</title>
        <authorList>
            <person name="Boulter J."/>
            <person name="Greenfield A."/>
            <person name="Weinmaster G."/>
        </authorList>
    </citation>
    <scope>NUCLEOTIDE SEQUENCE [MRNA]</scope>
</reference>
<evidence type="ECO:0000250" key="1"/>
<evidence type="ECO:0000255" key="2"/>
<evidence type="ECO:0000255" key="3">
    <source>
        <dbReference type="PROSITE-ProRule" id="PRU00076"/>
    </source>
</evidence>
<evidence type="ECO:0000256" key="4">
    <source>
        <dbReference type="SAM" id="MobiDB-lite"/>
    </source>
</evidence>
<feature type="signal peptide" evidence="1">
    <location>
        <begin position="1"/>
        <end position="32"/>
    </location>
</feature>
<feature type="chain" id="PRO_0000007511" description="Delta-like protein 3">
    <location>
        <begin position="33"/>
        <end position="589"/>
    </location>
</feature>
<feature type="topological domain" description="Extracellular" evidence="2">
    <location>
        <begin position="33"/>
        <end position="494"/>
    </location>
</feature>
<feature type="transmembrane region" description="Helical" evidence="2">
    <location>
        <begin position="495"/>
        <end position="515"/>
    </location>
</feature>
<feature type="topological domain" description="Cytoplasmic" evidence="2">
    <location>
        <begin position="516"/>
        <end position="589"/>
    </location>
</feature>
<feature type="domain" description="DSL">
    <location>
        <begin position="174"/>
        <end position="213"/>
    </location>
</feature>
<feature type="domain" description="EGF-like 1" evidence="3">
    <location>
        <begin position="218"/>
        <end position="251"/>
    </location>
</feature>
<feature type="domain" description="EGF-like 2" evidence="3">
    <location>
        <begin position="276"/>
        <end position="312"/>
    </location>
</feature>
<feature type="domain" description="EGF-like 3" evidence="3">
    <location>
        <begin position="314"/>
        <end position="353"/>
    </location>
</feature>
<feature type="domain" description="EGF-like 4" evidence="3">
    <location>
        <begin position="355"/>
        <end position="391"/>
    </location>
</feature>
<feature type="domain" description="EGF-like 5" evidence="3">
    <location>
        <begin position="393"/>
        <end position="429"/>
    </location>
</feature>
<feature type="domain" description="EGF-like 6" evidence="3">
    <location>
        <begin position="431"/>
        <end position="467"/>
    </location>
</feature>
<feature type="region of interest" description="Disordered" evidence="4">
    <location>
        <begin position="552"/>
        <end position="574"/>
    </location>
</feature>
<feature type="disulfide bond" evidence="3">
    <location>
        <begin position="222"/>
        <end position="233"/>
    </location>
</feature>
<feature type="disulfide bond" evidence="3">
    <location>
        <begin position="226"/>
        <end position="239"/>
    </location>
</feature>
<feature type="disulfide bond" evidence="3">
    <location>
        <begin position="241"/>
        <end position="250"/>
    </location>
</feature>
<feature type="disulfide bond" evidence="3">
    <location>
        <begin position="280"/>
        <end position="291"/>
    </location>
</feature>
<feature type="disulfide bond" evidence="3">
    <location>
        <begin position="285"/>
        <end position="300"/>
    </location>
</feature>
<feature type="disulfide bond" evidence="3">
    <location>
        <begin position="302"/>
        <end position="311"/>
    </location>
</feature>
<feature type="disulfide bond" evidence="3">
    <location>
        <begin position="318"/>
        <end position="329"/>
    </location>
</feature>
<feature type="disulfide bond" evidence="3">
    <location>
        <begin position="323"/>
        <end position="341"/>
    </location>
</feature>
<feature type="disulfide bond" evidence="3">
    <location>
        <begin position="343"/>
        <end position="352"/>
    </location>
</feature>
<feature type="disulfide bond" evidence="3">
    <location>
        <begin position="359"/>
        <end position="370"/>
    </location>
</feature>
<feature type="disulfide bond" evidence="3">
    <location>
        <begin position="364"/>
        <end position="379"/>
    </location>
</feature>
<feature type="disulfide bond" evidence="3">
    <location>
        <begin position="381"/>
        <end position="390"/>
    </location>
</feature>
<feature type="disulfide bond" evidence="3">
    <location>
        <begin position="397"/>
        <end position="408"/>
    </location>
</feature>
<feature type="disulfide bond" evidence="3">
    <location>
        <begin position="402"/>
        <end position="417"/>
    </location>
</feature>
<feature type="disulfide bond" evidence="3">
    <location>
        <begin position="419"/>
        <end position="428"/>
    </location>
</feature>
<feature type="disulfide bond" evidence="3">
    <location>
        <begin position="435"/>
        <end position="446"/>
    </location>
</feature>
<feature type="disulfide bond" evidence="3">
    <location>
        <begin position="440"/>
        <end position="455"/>
    </location>
</feature>
<feature type="disulfide bond" evidence="3">
    <location>
        <begin position="457"/>
        <end position="466"/>
    </location>
</feature>
<comment type="function">
    <text evidence="1">Inhibits primary neurogenesis. May be required to divert neurons along a specific differentiation pathway. Plays a role in the formation of somite boundaries during segmentation of the paraxial mesoderm (By similarity).</text>
</comment>
<comment type="subunit">
    <text evidence="1">Can bind and activate Notch-1 or another Notch receptor.</text>
</comment>
<comment type="subcellular location">
    <subcellularLocation>
        <location evidence="1">Membrane</location>
        <topology evidence="1">Single-pass type I membrane protein</topology>
    </subcellularLocation>
</comment>
<comment type="domain">
    <text>The DSL domain is required for binding to the Notch receptor.</text>
</comment>
<comment type="PTM">
    <text evidence="1">Ubiquitinated by MIB (MIB1 or MIB2), leading to its endocytosis and subsequent degradation.</text>
</comment>
<gene>
    <name type="primary">Dll3</name>
</gene>
<name>DLL3_RAT</name>
<keyword id="KW-0217">Developmental protein</keyword>
<keyword id="KW-0221">Differentiation</keyword>
<keyword id="KW-1015">Disulfide bond</keyword>
<keyword id="KW-0245">EGF-like domain</keyword>
<keyword id="KW-0472">Membrane</keyword>
<keyword id="KW-0914">Notch signaling pathway</keyword>
<keyword id="KW-1185">Reference proteome</keyword>
<keyword id="KW-0677">Repeat</keyword>
<keyword id="KW-0732">Signal</keyword>
<keyword id="KW-0812">Transmembrane</keyword>
<keyword id="KW-1133">Transmembrane helix</keyword>
<keyword id="KW-0832">Ubl conjugation</keyword>
<organism>
    <name type="scientific">Rattus norvegicus</name>
    <name type="common">Rat</name>
    <dbReference type="NCBI Taxonomy" id="10116"/>
    <lineage>
        <taxon>Eukaryota</taxon>
        <taxon>Metazoa</taxon>
        <taxon>Chordata</taxon>
        <taxon>Craniata</taxon>
        <taxon>Vertebrata</taxon>
        <taxon>Euteleostomi</taxon>
        <taxon>Mammalia</taxon>
        <taxon>Eutheria</taxon>
        <taxon>Euarchontoglires</taxon>
        <taxon>Glires</taxon>
        <taxon>Rodentia</taxon>
        <taxon>Myomorpha</taxon>
        <taxon>Muroidea</taxon>
        <taxon>Muridae</taxon>
        <taxon>Murinae</taxon>
        <taxon>Rattus</taxon>
    </lineage>
</organism>
<dbReference type="EMBL" id="AF084576">
    <property type="protein sequence ID" value="AAC33303.1"/>
    <property type="molecule type" value="mRNA"/>
</dbReference>
<dbReference type="RefSeq" id="NP_446118.1">
    <property type="nucleotide sequence ID" value="NM_053666.1"/>
</dbReference>
<dbReference type="SMR" id="O88671"/>
<dbReference type="FunCoup" id="O88671">
    <property type="interactions" value="190"/>
</dbReference>
<dbReference type="STRING" id="10116.ENSRNOP00000026182"/>
<dbReference type="GlyGen" id="O88671">
    <property type="glycosylation" value="1 site"/>
</dbReference>
<dbReference type="PhosphoSitePlus" id="O88671"/>
<dbReference type="PaxDb" id="10116-ENSRNOP00000026182"/>
<dbReference type="ABCD" id="O88671">
    <property type="antibodies" value="8 sequenced antibodies"/>
</dbReference>
<dbReference type="GeneID" id="114125"/>
<dbReference type="KEGG" id="rno:114125"/>
<dbReference type="UCSC" id="RGD:70953">
    <property type="organism name" value="rat"/>
</dbReference>
<dbReference type="AGR" id="RGD:70953"/>
<dbReference type="CTD" id="10683"/>
<dbReference type="RGD" id="70953">
    <property type="gene designation" value="Dll3"/>
</dbReference>
<dbReference type="eggNOG" id="KOG1217">
    <property type="taxonomic scope" value="Eukaryota"/>
</dbReference>
<dbReference type="InParanoid" id="O88671"/>
<dbReference type="PhylomeDB" id="O88671"/>
<dbReference type="PRO" id="PR:O88671"/>
<dbReference type="Proteomes" id="UP000002494">
    <property type="component" value="Unplaced"/>
</dbReference>
<dbReference type="GO" id="GO:0005886">
    <property type="term" value="C:plasma membrane"/>
    <property type="evidence" value="ECO:0000266"/>
    <property type="project" value="RGD"/>
</dbReference>
<dbReference type="GO" id="GO:0005509">
    <property type="term" value="F:calcium ion binding"/>
    <property type="evidence" value="ECO:0007669"/>
    <property type="project" value="InterPro"/>
</dbReference>
<dbReference type="GO" id="GO:0005112">
    <property type="term" value="F:Notch binding"/>
    <property type="evidence" value="ECO:0000353"/>
    <property type="project" value="RGD"/>
</dbReference>
<dbReference type="GO" id="GO:0001709">
    <property type="term" value="P:cell fate determination"/>
    <property type="evidence" value="ECO:0000304"/>
    <property type="project" value="RGD"/>
</dbReference>
<dbReference type="GO" id="GO:0007386">
    <property type="term" value="P:compartment pattern specification"/>
    <property type="evidence" value="ECO:0000266"/>
    <property type="project" value="RGD"/>
</dbReference>
<dbReference type="GO" id="GO:0048712">
    <property type="term" value="P:negative regulation of astrocyte differentiation"/>
    <property type="evidence" value="ECO:0000314"/>
    <property type="project" value="RGD"/>
</dbReference>
<dbReference type="GO" id="GO:0050768">
    <property type="term" value="P:negative regulation of neurogenesis"/>
    <property type="evidence" value="ECO:0000266"/>
    <property type="project" value="RGD"/>
</dbReference>
<dbReference type="GO" id="GO:0045746">
    <property type="term" value="P:negative regulation of Notch signaling pathway"/>
    <property type="evidence" value="ECO:0000314"/>
    <property type="project" value="RGD"/>
</dbReference>
<dbReference type="GO" id="GO:0007219">
    <property type="term" value="P:Notch signaling pathway"/>
    <property type="evidence" value="ECO:0000318"/>
    <property type="project" value="GO_Central"/>
</dbReference>
<dbReference type="GO" id="GO:0048339">
    <property type="term" value="P:paraxial mesoderm development"/>
    <property type="evidence" value="ECO:0000266"/>
    <property type="project" value="RGD"/>
</dbReference>
<dbReference type="GO" id="GO:0050769">
    <property type="term" value="P:positive regulation of neurogenesis"/>
    <property type="evidence" value="ECO:0000314"/>
    <property type="project" value="RGD"/>
</dbReference>
<dbReference type="GO" id="GO:0001501">
    <property type="term" value="P:skeletal system development"/>
    <property type="evidence" value="ECO:0000250"/>
    <property type="project" value="UniProtKB"/>
</dbReference>
<dbReference type="GO" id="GO:0001756">
    <property type="term" value="P:somitogenesis"/>
    <property type="evidence" value="ECO:0000266"/>
    <property type="project" value="RGD"/>
</dbReference>
<dbReference type="GO" id="GO:0009888">
    <property type="term" value="P:tissue development"/>
    <property type="evidence" value="ECO:0000266"/>
    <property type="project" value="RGD"/>
</dbReference>
<dbReference type="CDD" id="cd00054">
    <property type="entry name" value="EGF_CA"/>
    <property type="match status" value="4"/>
</dbReference>
<dbReference type="FunFam" id="2.10.25.10:FF:000368">
    <property type="entry name" value="Delta-like 3 (Drosophila), isoform CRA_b"/>
    <property type="match status" value="1"/>
</dbReference>
<dbReference type="FunFam" id="2.10.25.10:FF:000403">
    <property type="entry name" value="Delta-like 3 (Drosophila), isoform CRA_b"/>
    <property type="match status" value="1"/>
</dbReference>
<dbReference type="FunFam" id="2.10.25.10:FF:000432">
    <property type="entry name" value="Delta-like 3 (Drosophila), isoform CRA_b"/>
    <property type="match status" value="1"/>
</dbReference>
<dbReference type="FunFam" id="2.10.25.10:FF:000585">
    <property type="entry name" value="Delta-like 3 (Drosophila), isoform CRA_b"/>
    <property type="match status" value="1"/>
</dbReference>
<dbReference type="FunFam" id="2.60.40.3510:FF:000005">
    <property type="entry name" value="Delta-like 3 (Drosophila), isoform CRA_b"/>
    <property type="match status" value="1"/>
</dbReference>
<dbReference type="FunFam" id="2.10.25.10:FF:000347">
    <property type="entry name" value="delta-like protein 3"/>
    <property type="match status" value="1"/>
</dbReference>
<dbReference type="FunFam" id="2.10.25.10:FF:000066">
    <property type="entry name" value="FAT atypical cadherin 4"/>
    <property type="match status" value="1"/>
</dbReference>
<dbReference type="Gene3D" id="2.60.40.3510">
    <property type="match status" value="1"/>
</dbReference>
<dbReference type="Gene3D" id="2.10.25.10">
    <property type="entry name" value="Laminin"/>
    <property type="match status" value="6"/>
</dbReference>
<dbReference type="InterPro" id="IPR001881">
    <property type="entry name" value="EGF-like_Ca-bd_dom"/>
</dbReference>
<dbReference type="InterPro" id="IPR013032">
    <property type="entry name" value="EGF-like_CS"/>
</dbReference>
<dbReference type="InterPro" id="IPR000742">
    <property type="entry name" value="EGF-like_dom"/>
</dbReference>
<dbReference type="InterPro" id="IPR011651">
    <property type="entry name" value="Notch_ligand_N"/>
</dbReference>
<dbReference type="PANTHER" id="PTHR12916">
    <property type="entry name" value="CYTOCHROME C OXIDASE POLYPEPTIDE VIC-2"/>
    <property type="match status" value="1"/>
</dbReference>
<dbReference type="PANTHER" id="PTHR12916:SF4">
    <property type="entry name" value="UNINFLATABLE, ISOFORM C"/>
    <property type="match status" value="1"/>
</dbReference>
<dbReference type="Pfam" id="PF00008">
    <property type="entry name" value="EGF"/>
    <property type="match status" value="2"/>
</dbReference>
<dbReference type="Pfam" id="PF12661">
    <property type="entry name" value="hEGF"/>
    <property type="match status" value="3"/>
</dbReference>
<dbReference type="Pfam" id="PF07657">
    <property type="entry name" value="MNNL"/>
    <property type="match status" value="1"/>
</dbReference>
<dbReference type="SMART" id="SM00181">
    <property type="entry name" value="EGF"/>
    <property type="match status" value="6"/>
</dbReference>
<dbReference type="SMART" id="SM00179">
    <property type="entry name" value="EGF_CA"/>
    <property type="match status" value="5"/>
</dbReference>
<dbReference type="SUPFAM" id="SSF57196">
    <property type="entry name" value="EGF/Laminin"/>
    <property type="match status" value="5"/>
</dbReference>
<dbReference type="PROSITE" id="PS00022">
    <property type="entry name" value="EGF_1"/>
    <property type="match status" value="6"/>
</dbReference>
<dbReference type="PROSITE" id="PS01186">
    <property type="entry name" value="EGF_2"/>
    <property type="match status" value="5"/>
</dbReference>
<dbReference type="PROSITE" id="PS50026">
    <property type="entry name" value="EGF_3"/>
    <property type="match status" value="6"/>
</dbReference>
<accession>O88671</accession>
<sequence length="589" mass="61425">MVSLQVSSLPQTLILAFLLPQALPAGVFELQIHSFGPGPGPGTPRSPCNARGPCRLFFRVCLKPGVSQEAAESLCALGAALSTSGPVYTEQPGVPAAALSLPDGLVRVPFLDAWPGTFSLIIETWREQLGERAAGPAWNLLARVAGRRRLAAGAPWARDVQRTGAWELHFSYRARCEPPAVGAACARLCRSRSAPSRCGPGLRPCTPFPDECEAPRESLTVCRAGCSPEHGYCEEPDECHCLEGWTGPLCTVPVSTSSCLNSRVSGPAGTGCLLPGPGPCDGNPCANGGSCSETPGSFECACPRGFYGPRCEVSGVTCADGPCFNGGLCVGGEDPDSAYVCHCPPAFQGSNCERRVDRCSLQPCQNGGLCLDLGHALRCRCRAGFAGPRCEHDLDDCAGRACANGGTCVEGGGARRCSCALGFGGRDCRERADPCASRPCAHGGRCYAHFSGLVCACAPGYMGVRCEFAVRPDGADAVPAAPRGLRQADSQRFLLPPALGLLAAAALAGAALLLIHVRRRGPGRDTGTRLLSGTREPSVHTLPDALNNLRLQDGAGDGPTSSADWNHPEDGDSRSIYVIPAPSIYAREA</sequence>